<accession>Q9Y4J8</accession>
<accession>A8K541</accession>
<accession>A8MSZ0</accession>
<accession>A8MUY4</accession>
<accession>B4DGS6</accession>
<accession>B4DIR0</accession>
<accession>B4DIU8</accession>
<accession>M0QYX6</accession>
<accession>M0R397</accession>
<accession>O15332</accession>
<accession>O15333</accession>
<accession>O75697</accession>
<accession>Q13197</accession>
<accession>Q13198</accession>
<accession>Q13199</accession>
<accession>Q13498</accession>
<accession>Q13499</accession>
<accession>Q13500</accession>
<accession>Q59GK7</accession>
<accession>Q9BS59</accession>
<evidence type="ECO:0000250" key="1"/>
<evidence type="ECO:0000250" key="2">
    <source>
        <dbReference type="UniProtKB" id="Q9D2N4"/>
    </source>
</evidence>
<evidence type="ECO:0000255" key="3"/>
<evidence type="ECO:0000255" key="4">
    <source>
        <dbReference type="PROSITE-ProRule" id="PRU00228"/>
    </source>
</evidence>
<evidence type="ECO:0000256" key="5">
    <source>
        <dbReference type="SAM" id="MobiDB-lite"/>
    </source>
</evidence>
<evidence type="ECO:0000269" key="6">
    <source>
    </source>
</evidence>
<evidence type="ECO:0000269" key="7">
    <source>
    </source>
</evidence>
<evidence type="ECO:0000269" key="8">
    <source>
    </source>
</evidence>
<evidence type="ECO:0000269" key="9">
    <source>
    </source>
</evidence>
<evidence type="ECO:0000269" key="10">
    <source>
    </source>
</evidence>
<evidence type="ECO:0000269" key="11">
    <source>
    </source>
</evidence>
<evidence type="ECO:0000269" key="12">
    <source>
    </source>
</evidence>
<evidence type="ECO:0000303" key="13">
    <source>
    </source>
</evidence>
<evidence type="ECO:0000303" key="14">
    <source>
    </source>
</evidence>
<evidence type="ECO:0000303" key="15">
    <source>
    </source>
</evidence>
<evidence type="ECO:0000303" key="16">
    <source>
    </source>
</evidence>
<evidence type="ECO:0000303" key="17">
    <source ref="4"/>
</evidence>
<evidence type="ECO:0000303" key="18">
    <source ref="6"/>
</evidence>
<evidence type="ECO:0000305" key="19"/>
<evidence type="ECO:0000312" key="20">
    <source>
        <dbReference type="HGNC" id="HGNC:3057"/>
    </source>
</evidence>
<evidence type="ECO:0007829" key="21">
    <source>
        <dbReference type="PDB" id="2E5R"/>
    </source>
</evidence>
<sequence length="743" mass="83901">MIEDSGKRGNTMAERRQLFAEMRAQDLDRIRLSTYRTACKLRFVQKKCNLHLVDIWNVIEALRENALNNLDPNTELNVSRLEAVLSTIFYQLNKRMPTTHQIHVEQSISLLLNFLLAAFDPEGHGKISVFAVKMALATLCGGKIMDKLRYIFSMISDSSGVMVYGRYDQFLREVLKLPTAVFEGPSFGYTEQSARSCFSQQKKVTLNGFLDTLMSDPPPQCLVWLPLLHRLANVENVFHPVECSYCHSESMMGFRYRCQQCHNYQLCQDCFWRGHAGGSHSNQHQMKEYTSWKSPAKKLTNALSKSLSCASSREPLHPMFPDQPEKPLNLAHIVDTWPPRPVTSMNDTLFSHSVPSSGSPFITRSSPPKDSEVEQNKLLARAAPAFLKGKGIQYSLNVADRLADEHVLIGLYVNMLRNNPSCMLESSNRLDEEHRLIARYAARLAAESSSSQPPQQRSAPDISFTIDANKQQRQLIAELENKNREILQEIQRLRLEHEQASQPTPEKAQQNPTLLAELRLLRQRKDELEQRMSALQESRRELMVQLEGLMKLLKTQGAGSPRSSPSHTISRPIPMPIRSASACSTPTHTPQDSLTGVGGDVQEAFAQSSRRNLRNDLLVAADSITNTMSSLVKELNSEVGSETESNVDSEFARTQFEDLVPSPTSEKAFLAQIHARKPGYIHSGATTSTMRGDMVTEDADPYVQPEDENYENDSVRQLENELQMEEYLKQKLQDEAYQVSLQG</sequence>
<organism>
    <name type="scientific">Homo sapiens</name>
    <name type="common">Human</name>
    <dbReference type="NCBI Taxonomy" id="9606"/>
    <lineage>
        <taxon>Eukaryota</taxon>
        <taxon>Metazoa</taxon>
        <taxon>Chordata</taxon>
        <taxon>Craniata</taxon>
        <taxon>Vertebrata</taxon>
        <taxon>Euteleostomi</taxon>
        <taxon>Mammalia</taxon>
        <taxon>Eutheria</taxon>
        <taxon>Euarchontoglires</taxon>
        <taxon>Primates</taxon>
        <taxon>Haplorrhini</taxon>
        <taxon>Catarrhini</taxon>
        <taxon>Hominidae</taxon>
        <taxon>Homo</taxon>
    </lineage>
</organism>
<gene>
    <name evidence="20" type="primary">DTNA</name>
    <name type="synonym">DRP3</name>
</gene>
<name>DTNA_HUMAN</name>
<keyword id="KW-0002">3D-structure</keyword>
<keyword id="KW-0025">Alternative splicing</keyword>
<keyword id="KW-0122">Cardiomyopathy</keyword>
<keyword id="KW-1003">Cell membrane</keyword>
<keyword id="KW-0175">Coiled coil</keyword>
<keyword id="KW-0963">Cytoplasm</keyword>
<keyword id="KW-0472">Membrane</keyword>
<keyword id="KW-0479">Metal-binding</keyword>
<keyword id="KW-0597">Phosphoprotein</keyword>
<keyword id="KW-1267">Proteomics identification</keyword>
<keyword id="KW-1185">Reference proteome</keyword>
<keyword id="KW-0770">Synapse</keyword>
<keyword id="KW-0862">Zinc</keyword>
<keyword id="KW-0863">Zinc-finger</keyword>
<dbReference type="EMBL" id="U46744">
    <property type="protein sequence ID" value="AAC50429.1"/>
    <property type="molecule type" value="mRNA"/>
</dbReference>
<dbReference type="EMBL" id="U46745">
    <property type="protein sequence ID" value="AAC50430.1"/>
    <property type="molecule type" value="mRNA"/>
</dbReference>
<dbReference type="EMBL" id="U26744">
    <property type="protein sequence ID" value="AAC50426.1"/>
    <property type="molecule type" value="mRNA"/>
</dbReference>
<dbReference type="EMBL" id="U46746">
    <property type="protein sequence ID" value="AAC50431.1"/>
    <property type="molecule type" value="mRNA"/>
</dbReference>
<dbReference type="EMBL" id="U26742">
    <property type="protein sequence ID" value="AAC50424.1"/>
    <property type="molecule type" value="mRNA"/>
</dbReference>
<dbReference type="EMBL" id="U26743">
    <property type="protein sequence ID" value="AAC50425.1"/>
    <property type="molecule type" value="mRNA"/>
</dbReference>
<dbReference type="EMBL" id="AK294746">
    <property type="protein sequence ID" value="BAG57887.1"/>
    <property type="molecule type" value="mRNA"/>
</dbReference>
<dbReference type="EMBL" id="AK295732">
    <property type="protein sequence ID" value="BAG58572.1"/>
    <property type="molecule type" value="mRNA"/>
</dbReference>
<dbReference type="EMBL" id="AB209102">
    <property type="protein sequence ID" value="BAD92339.1"/>
    <property type="status" value="ALT_INIT"/>
    <property type="molecule type" value="mRNA"/>
</dbReference>
<dbReference type="EMBL" id="AK291156">
    <property type="protein sequence ID" value="BAF83845.1"/>
    <property type="molecule type" value="mRNA"/>
</dbReference>
<dbReference type="EMBL" id="AK295789">
    <property type="protein sequence ID" value="BAG58610.1"/>
    <property type="molecule type" value="mRNA"/>
</dbReference>
<dbReference type="EMBL" id="U84551">
    <property type="protein sequence ID" value="AAB58543.1"/>
    <property type="molecule type" value="Genomic_DNA"/>
</dbReference>
<dbReference type="EMBL" id="U84529">
    <property type="protein sequence ID" value="AAB58543.1"/>
    <property type="status" value="JOINED"/>
    <property type="molecule type" value="Genomic_DNA"/>
</dbReference>
<dbReference type="EMBL" id="U84530">
    <property type="protein sequence ID" value="AAB58543.1"/>
    <property type="status" value="JOINED"/>
    <property type="molecule type" value="Genomic_DNA"/>
</dbReference>
<dbReference type="EMBL" id="U84531">
    <property type="protein sequence ID" value="AAB58543.1"/>
    <property type="status" value="JOINED"/>
    <property type="molecule type" value="Genomic_DNA"/>
</dbReference>
<dbReference type="EMBL" id="U84532">
    <property type="protein sequence ID" value="AAB58543.1"/>
    <property type="status" value="JOINED"/>
    <property type="molecule type" value="Genomic_DNA"/>
</dbReference>
<dbReference type="EMBL" id="U84533">
    <property type="protein sequence ID" value="AAB58543.1"/>
    <property type="status" value="JOINED"/>
    <property type="molecule type" value="Genomic_DNA"/>
</dbReference>
<dbReference type="EMBL" id="U84534">
    <property type="protein sequence ID" value="AAB58543.1"/>
    <property type="status" value="JOINED"/>
    <property type="molecule type" value="Genomic_DNA"/>
</dbReference>
<dbReference type="EMBL" id="U84535">
    <property type="protein sequence ID" value="AAB58543.1"/>
    <property type="status" value="JOINED"/>
    <property type="molecule type" value="Genomic_DNA"/>
</dbReference>
<dbReference type="EMBL" id="U84536">
    <property type="protein sequence ID" value="AAB58543.1"/>
    <property type="status" value="JOINED"/>
    <property type="molecule type" value="Genomic_DNA"/>
</dbReference>
<dbReference type="EMBL" id="U84537">
    <property type="protein sequence ID" value="AAB58543.1"/>
    <property type="status" value="JOINED"/>
    <property type="molecule type" value="Genomic_DNA"/>
</dbReference>
<dbReference type="EMBL" id="U84538">
    <property type="protein sequence ID" value="AAB58543.1"/>
    <property type="status" value="JOINED"/>
    <property type="molecule type" value="Genomic_DNA"/>
</dbReference>
<dbReference type="EMBL" id="U84539">
    <property type="protein sequence ID" value="AAB58543.1"/>
    <property type="status" value="JOINED"/>
    <property type="molecule type" value="Genomic_DNA"/>
</dbReference>
<dbReference type="EMBL" id="U84541">
    <property type="protein sequence ID" value="AAB58543.1"/>
    <property type="status" value="JOINED"/>
    <property type="molecule type" value="Genomic_DNA"/>
</dbReference>
<dbReference type="EMBL" id="U84542">
    <property type="protein sequence ID" value="AAB58543.1"/>
    <property type="status" value="JOINED"/>
    <property type="molecule type" value="Genomic_DNA"/>
</dbReference>
<dbReference type="EMBL" id="U84543">
    <property type="protein sequence ID" value="AAB58543.1"/>
    <property type="status" value="JOINED"/>
    <property type="molecule type" value="Genomic_DNA"/>
</dbReference>
<dbReference type="EMBL" id="U84544">
    <property type="protein sequence ID" value="AAB58543.1"/>
    <property type="status" value="JOINED"/>
    <property type="molecule type" value="Genomic_DNA"/>
</dbReference>
<dbReference type="EMBL" id="U84545">
    <property type="protein sequence ID" value="AAB58543.1"/>
    <property type="status" value="JOINED"/>
    <property type="molecule type" value="Genomic_DNA"/>
</dbReference>
<dbReference type="EMBL" id="U84546">
    <property type="protein sequence ID" value="AAB58543.1"/>
    <property type="status" value="JOINED"/>
    <property type="molecule type" value="Genomic_DNA"/>
</dbReference>
<dbReference type="EMBL" id="U84548">
    <property type="protein sequence ID" value="AAB58543.1"/>
    <property type="status" value="JOINED"/>
    <property type="molecule type" value="Genomic_DNA"/>
</dbReference>
<dbReference type="EMBL" id="U84549">
    <property type="protein sequence ID" value="AAB58543.1"/>
    <property type="status" value="JOINED"/>
    <property type="molecule type" value="Genomic_DNA"/>
</dbReference>
<dbReference type="EMBL" id="U84550">
    <property type="protein sequence ID" value="AAB58543.1"/>
    <property type="status" value="JOINED"/>
    <property type="molecule type" value="Genomic_DNA"/>
</dbReference>
<dbReference type="EMBL" id="U84547">
    <property type="protein sequence ID" value="AAB58542.1"/>
    <property type="molecule type" value="Genomic_DNA"/>
</dbReference>
<dbReference type="EMBL" id="U84529">
    <property type="protein sequence ID" value="AAB58542.1"/>
    <property type="status" value="JOINED"/>
    <property type="molecule type" value="Genomic_DNA"/>
</dbReference>
<dbReference type="EMBL" id="U84530">
    <property type="protein sequence ID" value="AAB58542.1"/>
    <property type="status" value="JOINED"/>
    <property type="molecule type" value="Genomic_DNA"/>
</dbReference>
<dbReference type="EMBL" id="U84531">
    <property type="protein sequence ID" value="AAB58542.1"/>
    <property type="status" value="JOINED"/>
    <property type="molecule type" value="Genomic_DNA"/>
</dbReference>
<dbReference type="EMBL" id="U84532">
    <property type="protein sequence ID" value="AAB58542.1"/>
    <property type="status" value="JOINED"/>
    <property type="molecule type" value="Genomic_DNA"/>
</dbReference>
<dbReference type="EMBL" id="U84533">
    <property type="protein sequence ID" value="AAB58542.1"/>
    <property type="status" value="JOINED"/>
    <property type="molecule type" value="Genomic_DNA"/>
</dbReference>
<dbReference type="EMBL" id="U84534">
    <property type="protein sequence ID" value="AAB58542.1"/>
    <property type="status" value="JOINED"/>
    <property type="molecule type" value="Genomic_DNA"/>
</dbReference>
<dbReference type="EMBL" id="U84535">
    <property type="protein sequence ID" value="AAB58542.1"/>
    <property type="status" value="JOINED"/>
    <property type="molecule type" value="Genomic_DNA"/>
</dbReference>
<dbReference type="EMBL" id="U84536">
    <property type="protein sequence ID" value="AAB58542.1"/>
    <property type="status" value="JOINED"/>
    <property type="molecule type" value="Genomic_DNA"/>
</dbReference>
<dbReference type="EMBL" id="U84537">
    <property type="protein sequence ID" value="AAB58542.1"/>
    <property type="status" value="JOINED"/>
    <property type="molecule type" value="Genomic_DNA"/>
</dbReference>
<dbReference type="EMBL" id="U84538">
    <property type="protein sequence ID" value="AAB58542.1"/>
    <property type="status" value="JOINED"/>
    <property type="molecule type" value="Genomic_DNA"/>
</dbReference>
<dbReference type="EMBL" id="U84539">
    <property type="protein sequence ID" value="AAB58542.1"/>
    <property type="status" value="JOINED"/>
    <property type="molecule type" value="Genomic_DNA"/>
</dbReference>
<dbReference type="EMBL" id="U84541">
    <property type="protein sequence ID" value="AAB58542.1"/>
    <property type="status" value="JOINED"/>
    <property type="molecule type" value="Genomic_DNA"/>
</dbReference>
<dbReference type="EMBL" id="U84542">
    <property type="protein sequence ID" value="AAB58542.1"/>
    <property type="status" value="JOINED"/>
    <property type="molecule type" value="Genomic_DNA"/>
</dbReference>
<dbReference type="EMBL" id="U84543">
    <property type="protein sequence ID" value="AAB58542.1"/>
    <property type="status" value="JOINED"/>
    <property type="molecule type" value="Genomic_DNA"/>
</dbReference>
<dbReference type="EMBL" id="U84544">
    <property type="protein sequence ID" value="AAB58542.1"/>
    <property type="status" value="JOINED"/>
    <property type="molecule type" value="Genomic_DNA"/>
</dbReference>
<dbReference type="EMBL" id="U84545">
    <property type="protein sequence ID" value="AAB58542.1"/>
    <property type="status" value="JOINED"/>
    <property type="molecule type" value="Genomic_DNA"/>
</dbReference>
<dbReference type="EMBL" id="U84540">
    <property type="protein sequence ID" value="AAB58541.1"/>
    <property type="molecule type" value="Genomic_DNA"/>
</dbReference>
<dbReference type="EMBL" id="U84529">
    <property type="protein sequence ID" value="AAB58541.1"/>
    <property type="status" value="JOINED"/>
    <property type="molecule type" value="Genomic_DNA"/>
</dbReference>
<dbReference type="EMBL" id="U84530">
    <property type="protein sequence ID" value="AAB58541.1"/>
    <property type="status" value="JOINED"/>
    <property type="molecule type" value="Genomic_DNA"/>
</dbReference>
<dbReference type="EMBL" id="U84531">
    <property type="protein sequence ID" value="AAB58541.1"/>
    <property type="status" value="JOINED"/>
    <property type="molecule type" value="Genomic_DNA"/>
</dbReference>
<dbReference type="EMBL" id="U84532">
    <property type="protein sequence ID" value="AAB58541.1"/>
    <property type="status" value="JOINED"/>
    <property type="molecule type" value="Genomic_DNA"/>
</dbReference>
<dbReference type="EMBL" id="U84533">
    <property type="protein sequence ID" value="AAB58541.1"/>
    <property type="status" value="JOINED"/>
    <property type="molecule type" value="Genomic_DNA"/>
</dbReference>
<dbReference type="EMBL" id="U84534">
    <property type="protein sequence ID" value="AAB58541.1"/>
    <property type="status" value="JOINED"/>
    <property type="molecule type" value="Genomic_DNA"/>
</dbReference>
<dbReference type="EMBL" id="U84535">
    <property type="protein sequence ID" value="AAB58541.1"/>
    <property type="status" value="JOINED"/>
    <property type="molecule type" value="Genomic_DNA"/>
</dbReference>
<dbReference type="EMBL" id="U84536">
    <property type="protein sequence ID" value="AAB58541.1"/>
    <property type="status" value="JOINED"/>
    <property type="molecule type" value="Genomic_DNA"/>
</dbReference>
<dbReference type="EMBL" id="U84537">
    <property type="protein sequence ID" value="AAB58541.1"/>
    <property type="status" value="JOINED"/>
    <property type="molecule type" value="Genomic_DNA"/>
</dbReference>
<dbReference type="EMBL" id="U84538">
    <property type="protein sequence ID" value="AAB58541.1"/>
    <property type="status" value="JOINED"/>
    <property type="molecule type" value="Genomic_DNA"/>
</dbReference>
<dbReference type="EMBL" id="AJ009668">
    <property type="protein sequence ID" value="CAA08769.1"/>
    <property type="molecule type" value="mRNA"/>
</dbReference>
<dbReference type="EMBL" id="BT006937">
    <property type="protein sequence ID" value="AAP35583.1"/>
    <property type="molecule type" value="mRNA"/>
</dbReference>
<dbReference type="EMBL" id="AC068506">
    <property type="status" value="NOT_ANNOTATED_CDS"/>
    <property type="molecule type" value="Genomic_DNA"/>
</dbReference>
<dbReference type="EMBL" id="AC022601">
    <property type="status" value="NOT_ANNOTATED_CDS"/>
    <property type="molecule type" value="Genomic_DNA"/>
</dbReference>
<dbReference type="EMBL" id="AC103768">
    <property type="status" value="NOT_ANNOTATED_CDS"/>
    <property type="molecule type" value="Genomic_DNA"/>
</dbReference>
<dbReference type="EMBL" id="AC013290">
    <property type="status" value="NOT_ANNOTATED_CDS"/>
    <property type="molecule type" value="Genomic_DNA"/>
</dbReference>
<dbReference type="EMBL" id="CH471088">
    <property type="protein sequence ID" value="EAX01319.1"/>
    <property type="molecule type" value="Genomic_DNA"/>
</dbReference>
<dbReference type="EMBL" id="CH471088">
    <property type="protein sequence ID" value="EAX01325.1"/>
    <property type="molecule type" value="Genomic_DNA"/>
</dbReference>
<dbReference type="EMBL" id="CH471088">
    <property type="protein sequence ID" value="EAX01328.1"/>
    <property type="molecule type" value="Genomic_DNA"/>
</dbReference>
<dbReference type="EMBL" id="BC005300">
    <property type="protein sequence ID" value="AAH05300.1"/>
    <property type="molecule type" value="mRNA"/>
</dbReference>
<dbReference type="CCDS" id="CCDS11908.1">
    <molecule id="Q9Y4J8-4"/>
</dbReference>
<dbReference type="CCDS" id="CCDS11909.1">
    <molecule id="Q9Y4J8-6"/>
</dbReference>
<dbReference type="CCDS" id="CCDS42426.1">
    <molecule id="Q9Y4J8-7"/>
</dbReference>
<dbReference type="CCDS" id="CCDS45848.1">
    <molecule id="Q9Y4J8-2"/>
</dbReference>
<dbReference type="CCDS" id="CCDS56060.1">
    <molecule id="Q9Y4J8-9"/>
</dbReference>
<dbReference type="CCDS" id="CCDS56061.1">
    <molecule id="Q9Y4J8-14"/>
</dbReference>
<dbReference type="CCDS" id="CCDS56062.1">
    <molecule id="Q9Y4J8-11"/>
</dbReference>
<dbReference type="CCDS" id="CCDS56063.1">
    <molecule id="Q9Y4J8-10"/>
</dbReference>
<dbReference type="CCDS" id="CCDS59309.1">
    <molecule id="Q9Y4J8-5"/>
</dbReference>
<dbReference type="CCDS" id="CCDS59310.1">
    <molecule id="Q9Y4J8-16"/>
</dbReference>
<dbReference type="CCDS" id="CCDS59311.1">
    <molecule id="Q9Y4J8-13"/>
</dbReference>
<dbReference type="CCDS" id="CCDS59312.1">
    <molecule id="Q9Y4J8-15"/>
</dbReference>
<dbReference type="CCDS" id="CCDS59313.1">
    <molecule id="Q9Y4J8-12"/>
</dbReference>
<dbReference type="CCDS" id="CCDS59314.1">
    <molecule id="Q9Y4J8-8"/>
</dbReference>
<dbReference type="CCDS" id="CCDS92448.1">
    <molecule id="Q9Y4J8-17"/>
</dbReference>
<dbReference type="RefSeq" id="NP_001121647.1">
    <molecule id="Q9Y4J8-9"/>
    <property type="nucleotide sequence ID" value="NM_001128175.2"/>
</dbReference>
<dbReference type="RefSeq" id="NP_001185867.1">
    <molecule id="Q9Y4J8-15"/>
    <property type="nucleotide sequence ID" value="NM_001198938.2"/>
</dbReference>
<dbReference type="RefSeq" id="NP_001185868.1">
    <molecule id="Q9Y4J8-14"/>
    <property type="nucleotide sequence ID" value="NM_001198939.2"/>
</dbReference>
<dbReference type="RefSeq" id="NP_001185869.1">
    <molecule id="Q9Y4J8-13"/>
    <property type="nucleotide sequence ID" value="NM_001198940.2"/>
</dbReference>
<dbReference type="RefSeq" id="NP_001185870.1">
    <molecule id="Q9Y4J8-16"/>
    <property type="nucleotide sequence ID" value="NM_001198941.2"/>
</dbReference>
<dbReference type="RefSeq" id="NP_001185871.1">
    <molecule id="Q9Y4J8-11"/>
    <property type="nucleotide sequence ID" value="NM_001198942.1"/>
</dbReference>
<dbReference type="RefSeq" id="NP_001185873.1">
    <molecule id="Q9Y4J8-10"/>
    <property type="nucleotide sequence ID" value="NM_001198944.1"/>
</dbReference>
<dbReference type="RefSeq" id="NP_001185874.1">
    <molecule id="Q9Y4J8-12"/>
    <property type="nucleotide sequence ID" value="NM_001198945.2"/>
</dbReference>
<dbReference type="RefSeq" id="NP_001373682.1">
    <molecule id="Q9Y4J8-15"/>
    <property type="nucleotide sequence ID" value="NM_001386753.1"/>
</dbReference>
<dbReference type="RefSeq" id="NP_001373690.1">
    <molecule id="Q9Y4J8-2"/>
    <property type="nucleotide sequence ID" value="NM_001386761.1"/>
</dbReference>
<dbReference type="RefSeq" id="NP_001373692.1">
    <molecule id="Q9Y4J8-13"/>
    <property type="nucleotide sequence ID" value="NM_001386763.1"/>
</dbReference>
<dbReference type="RefSeq" id="NP_001373693.1">
    <molecule id="Q9Y4J8-13"/>
    <property type="nucleotide sequence ID" value="NM_001386764.1"/>
</dbReference>
<dbReference type="RefSeq" id="NP_001373694.1">
    <molecule id="Q9Y4J8-13"/>
    <property type="nucleotide sequence ID" value="NM_001386765.1"/>
</dbReference>
<dbReference type="RefSeq" id="NP_001373695.1">
    <molecule id="Q9Y4J8-13"/>
    <property type="nucleotide sequence ID" value="NM_001386766.1"/>
</dbReference>
<dbReference type="RefSeq" id="NP_001373696.1">
    <molecule id="Q9Y4J8-13"/>
    <property type="nucleotide sequence ID" value="NM_001386767.1"/>
</dbReference>
<dbReference type="RefSeq" id="NP_001373700.1">
    <molecule id="Q9Y4J8-16"/>
    <property type="nucleotide sequence ID" value="NM_001386771.1"/>
</dbReference>
<dbReference type="RefSeq" id="NP_001373701.1">
    <molecule id="Q9Y4J8-16"/>
    <property type="nucleotide sequence ID" value="NM_001386772.1"/>
</dbReference>
<dbReference type="RefSeq" id="NP_001373704.1">
    <molecule id="Q9Y4J8-7"/>
    <property type="nucleotide sequence ID" value="NM_001386775.1"/>
</dbReference>
<dbReference type="RefSeq" id="NP_001373705.1">
    <molecule id="Q9Y4J8-9"/>
    <property type="nucleotide sequence ID" value="NM_001386776.1"/>
</dbReference>
<dbReference type="RefSeq" id="NP_001373706.1">
    <molecule id="Q9Y4J8-9"/>
    <property type="nucleotide sequence ID" value="NM_001386777.1"/>
</dbReference>
<dbReference type="RefSeq" id="NP_001373717.1">
    <molecule id="Q9Y4J8-17"/>
    <property type="nucleotide sequence ID" value="NM_001386788.1"/>
</dbReference>
<dbReference type="RefSeq" id="NP_001373724.1">
    <molecule id="Q9Y4J8-17"/>
    <property type="nucleotide sequence ID" value="NM_001386795.1"/>
</dbReference>
<dbReference type="RefSeq" id="NP_001381.2">
    <molecule id="Q9Y4J8-1"/>
    <property type="nucleotide sequence ID" value="NM_001390.4"/>
</dbReference>
<dbReference type="RefSeq" id="NP_001382.2">
    <molecule id="Q9Y4J8-3"/>
    <property type="nucleotide sequence ID" value="NM_001391.5"/>
</dbReference>
<dbReference type="RefSeq" id="NP_001383.2">
    <molecule id="Q9Y4J8-7"/>
    <property type="nucleotide sequence ID" value="NM_001392.4"/>
</dbReference>
<dbReference type="RefSeq" id="NP_116757.2">
    <molecule id="Q9Y4J8-2"/>
    <property type="nucleotide sequence ID" value="NM_032975.3"/>
</dbReference>
<dbReference type="RefSeq" id="NP_116760.2">
    <molecule id="Q9Y4J8-4"/>
    <property type="nucleotide sequence ID" value="NM_032978.6"/>
</dbReference>
<dbReference type="RefSeq" id="NP_116761.2">
    <molecule id="Q9Y4J8-5"/>
    <property type="nucleotide sequence ID" value="NM_032979.4"/>
</dbReference>
<dbReference type="RefSeq" id="NP_116762.2">
    <molecule id="Q9Y4J8-6"/>
    <property type="nucleotide sequence ID" value="NM_032980.3"/>
</dbReference>
<dbReference type="RefSeq" id="NP_116763.1">
    <molecule id="Q9Y4J8-8"/>
    <property type="nucleotide sequence ID" value="NM_032981.5"/>
</dbReference>
<dbReference type="RefSeq" id="XP_011524155.1">
    <property type="nucleotide sequence ID" value="XM_011525853.2"/>
</dbReference>
<dbReference type="RefSeq" id="XP_016881066.1">
    <property type="nucleotide sequence ID" value="XM_017025577.1"/>
</dbReference>
<dbReference type="RefSeq" id="XP_016881073.1">
    <property type="nucleotide sequence ID" value="XM_017025584.1"/>
</dbReference>
<dbReference type="RefSeq" id="XP_016881076.1">
    <property type="nucleotide sequence ID" value="XM_017025587.1"/>
</dbReference>
<dbReference type="RefSeq" id="XP_016881077.1">
    <property type="nucleotide sequence ID" value="XM_017025588.1"/>
</dbReference>
<dbReference type="RefSeq" id="XP_016881078.1">
    <property type="nucleotide sequence ID" value="XM_017025589.1"/>
</dbReference>
<dbReference type="RefSeq" id="XP_016881079.1">
    <property type="nucleotide sequence ID" value="XM_017025590.1"/>
</dbReference>
<dbReference type="RefSeq" id="XP_016881080.1">
    <property type="nucleotide sequence ID" value="XM_017025591.1"/>
</dbReference>
<dbReference type="RefSeq" id="XP_016881089.1">
    <property type="nucleotide sequence ID" value="XM_017025600.1"/>
</dbReference>
<dbReference type="RefSeq" id="XP_016881090.1">
    <property type="nucleotide sequence ID" value="XM_017025601.1"/>
</dbReference>
<dbReference type="RefSeq" id="XP_016881091.1">
    <property type="nucleotide sequence ID" value="XM_017025602.1"/>
</dbReference>
<dbReference type="RefSeq" id="XP_047293278.1">
    <molecule id="Q9Y4J8-1"/>
    <property type="nucleotide sequence ID" value="XM_047437322.1"/>
</dbReference>
<dbReference type="RefSeq" id="XP_047293280.1">
    <molecule id="Q9Y4J8-15"/>
    <property type="nucleotide sequence ID" value="XM_047437324.1"/>
</dbReference>
<dbReference type="RefSeq" id="XP_047293286.1">
    <molecule id="Q9Y4J8-13"/>
    <property type="nucleotide sequence ID" value="XM_047437330.1"/>
</dbReference>
<dbReference type="RefSeq" id="XP_047293287.1">
    <molecule id="Q9Y4J8-13"/>
    <property type="nucleotide sequence ID" value="XM_047437331.1"/>
</dbReference>
<dbReference type="RefSeq" id="XP_047293288.1">
    <molecule id="Q9Y4J8-13"/>
    <property type="nucleotide sequence ID" value="XM_047437332.1"/>
</dbReference>
<dbReference type="RefSeq" id="XP_047293293.1">
    <molecule id="Q9Y4J8-16"/>
    <property type="nucleotide sequence ID" value="XM_047437337.1"/>
</dbReference>
<dbReference type="RefSeq" id="XP_047293294.1">
    <molecule id="Q9Y4J8-9"/>
    <property type="nucleotide sequence ID" value="XM_047437338.1"/>
</dbReference>
<dbReference type="RefSeq" id="XP_047293295.1">
    <molecule id="Q9Y4J8-9"/>
    <property type="nucleotide sequence ID" value="XM_047437339.1"/>
</dbReference>
<dbReference type="RefSeq" id="XP_054174221.1">
    <molecule id="Q9Y4J8-1"/>
    <property type="nucleotide sequence ID" value="XM_054318246.1"/>
</dbReference>
<dbReference type="RefSeq" id="XP_054174223.1">
    <molecule id="Q9Y4J8-15"/>
    <property type="nucleotide sequence ID" value="XM_054318248.1"/>
</dbReference>
<dbReference type="RefSeq" id="XP_054174229.1">
    <molecule id="Q9Y4J8-13"/>
    <property type="nucleotide sequence ID" value="XM_054318254.1"/>
</dbReference>
<dbReference type="RefSeq" id="XP_054174230.1">
    <molecule id="Q9Y4J8-13"/>
    <property type="nucleotide sequence ID" value="XM_054318255.1"/>
</dbReference>
<dbReference type="RefSeq" id="XP_054174231.1">
    <molecule id="Q9Y4J8-13"/>
    <property type="nucleotide sequence ID" value="XM_054318256.1"/>
</dbReference>
<dbReference type="RefSeq" id="XP_054174236.1">
    <molecule id="Q9Y4J8-16"/>
    <property type="nucleotide sequence ID" value="XM_054318261.1"/>
</dbReference>
<dbReference type="RefSeq" id="XP_054174237.1">
    <molecule id="Q9Y4J8-9"/>
    <property type="nucleotide sequence ID" value="XM_054318262.1"/>
</dbReference>
<dbReference type="RefSeq" id="XP_054174238.1">
    <molecule id="Q9Y4J8-9"/>
    <property type="nucleotide sequence ID" value="XM_054318263.1"/>
</dbReference>
<dbReference type="PDB" id="2E5R">
    <property type="method" value="NMR"/>
    <property type="chains" value="A=237-292"/>
</dbReference>
<dbReference type="PDBsum" id="2E5R"/>
<dbReference type="SMR" id="Q9Y4J8"/>
<dbReference type="BioGRID" id="108170">
    <property type="interactions" value="122"/>
</dbReference>
<dbReference type="ComplexPortal" id="CPX-2424">
    <molecule id="Q9Y4J8-3"/>
    <property type="entry name" value="Dystrophin glycoprotein complex, skeletal muscle variant"/>
</dbReference>
<dbReference type="ComplexPortal" id="CPX-2443">
    <molecule id="Q9Y4J8-2"/>
    <property type="entry name" value="Dystrophin glycoprotein complex, neuromuscular junction variant"/>
</dbReference>
<dbReference type="ComplexPortal" id="CPX-2455">
    <molecule id="Q9Y4J8-2"/>
    <property type="entry name" value="Dystrophin glycoprotein complex, retinal inner limiting membrane variant"/>
</dbReference>
<dbReference type="CORUM" id="Q9Y4J8"/>
<dbReference type="FunCoup" id="Q9Y4J8">
    <property type="interactions" value="1628"/>
</dbReference>
<dbReference type="IntAct" id="Q9Y4J8">
    <property type="interactions" value="57"/>
</dbReference>
<dbReference type="MINT" id="Q9Y4J8"/>
<dbReference type="STRING" id="9606.ENSP00000470152"/>
<dbReference type="TCDB" id="8.A.66.1.7">
    <property type="family name" value="the dystrophin (dystrophin) family"/>
</dbReference>
<dbReference type="GlyGen" id="Q9Y4J8">
    <property type="glycosylation" value="3 sites, 2 N-linked glycans (1 site), 1 O-linked glycan (1 site)"/>
</dbReference>
<dbReference type="iPTMnet" id="Q9Y4J8"/>
<dbReference type="PhosphoSitePlus" id="Q9Y4J8"/>
<dbReference type="SwissPalm" id="Q9Y4J8"/>
<dbReference type="BioMuta" id="DTNA"/>
<dbReference type="DMDM" id="229462840"/>
<dbReference type="jPOST" id="Q9Y4J8"/>
<dbReference type="MassIVE" id="Q9Y4J8"/>
<dbReference type="PaxDb" id="9606-ENSP00000470152"/>
<dbReference type="PeptideAtlas" id="Q9Y4J8"/>
<dbReference type="ProteomicsDB" id="4321"/>
<dbReference type="ProteomicsDB" id="86213">
    <molecule id="Q9Y4J8-1"/>
</dbReference>
<dbReference type="ProteomicsDB" id="86214">
    <molecule id="Q9Y4J8-10"/>
</dbReference>
<dbReference type="ProteomicsDB" id="86215">
    <molecule id="Q9Y4J8-2"/>
</dbReference>
<dbReference type="ProteomicsDB" id="86216">
    <molecule id="Q9Y4J8-3"/>
</dbReference>
<dbReference type="ProteomicsDB" id="86217">
    <molecule id="Q9Y4J8-4"/>
</dbReference>
<dbReference type="ProteomicsDB" id="86218">
    <molecule id="Q9Y4J8-5"/>
</dbReference>
<dbReference type="ProteomicsDB" id="86219">
    <molecule id="Q9Y4J8-6"/>
</dbReference>
<dbReference type="ProteomicsDB" id="86220">
    <molecule id="Q9Y4J8-7"/>
</dbReference>
<dbReference type="ProteomicsDB" id="86221">
    <molecule id="Q9Y4J8-8"/>
</dbReference>
<dbReference type="ProteomicsDB" id="86222">
    <molecule id="Q9Y4J8-9"/>
</dbReference>
<dbReference type="Pumba" id="Q9Y4J8"/>
<dbReference type="Antibodypedia" id="22242">
    <property type="antibodies" value="261 antibodies from 26 providers"/>
</dbReference>
<dbReference type="DNASU" id="1837"/>
<dbReference type="Ensembl" id="ENST00000269192.11">
    <molecule id="Q9Y4J8-11"/>
    <property type="protein sequence ID" value="ENSP00000269192.7"/>
    <property type="gene ID" value="ENSG00000134769.23"/>
</dbReference>
<dbReference type="Ensembl" id="ENST00000283365.14">
    <molecule id="Q9Y4J8-13"/>
    <property type="protein sequence ID" value="ENSP00000283365.10"/>
    <property type="gene ID" value="ENSG00000134769.23"/>
</dbReference>
<dbReference type="Ensembl" id="ENST00000315456.10">
    <molecule id="Q9Y4J8-7"/>
    <property type="protein sequence ID" value="ENSP00000322519.5"/>
    <property type="gene ID" value="ENSG00000134769.23"/>
</dbReference>
<dbReference type="Ensembl" id="ENST00000348997.9">
    <molecule id="Q9Y4J8-4"/>
    <property type="protein sequence ID" value="ENSP00000336682.4"/>
    <property type="gene ID" value="ENSG00000134769.23"/>
</dbReference>
<dbReference type="Ensembl" id="ENST00000399113.7">
    <molecule id="Q9Y4J8-1"/>
    <property type="protein sequence ID" value="ENSP00000382064.3"/>
    <property type="gene ID" value="ENSG00000134769.23"/>
</dbReference>
<dbReference type="Ensembl" id="ENST00000399121.9">
    <molecule id="Q9Y4J8-14"/>
    <property type="protein sequence ID" value="ENSP00000382072.5"/>
    <property type="gene ID" value="ENSG00000134769.23"/>
</dbReference>
<dbReference type="Ensembl" id="ENST00000444659.6">
    <molecule id="Q9Y4J8-17"/>
    <property type="protein sequence ID" value="ENSP00000405819.2"/>
    <property type="gene ID" value="ENSG00000134769.23"/>
</dbReference>
<dbReference type="Ensembl" id="ENST00000554864.7">
    <molecule id="Q9Y4J8-9"/>
    <property type="protein sequence ID" value="ENSP00000451516.2"/>
    <property type="gene ID" value="ENSG00000134769.23"/>
</dbReference>
<dbReference type="Ensembl" id="ENST00000556414.7">
    <molecule id="Q9Y4J8-10"/>
    <property type="protein sequence ID" value="ENSP00000452255.2"/>
    <property type="gene ID" value="ENSG00000134769.23"/>
</dbReference>
<dbReference type="Ensembl" id="ENST00000591182.5">
    <molecule id="Q9Y4J8-6"/>
    <property type="protein sequence ID" value="ENSP00000467720.1"/>
    <property type="gene ID" value="ENSG00000134769.23"/>
</dbReference>
<dbReference type="Ensembl" id="ENST00000595022.5">
    <molecule id="Q9Y4J8-13"/>
    <property type="protein sequence ID" value="ENSP00000473078.1"/>
    <property type="gene ID" value="ENSG00000134769.23"/>
</dbReference>
<dbReference type="Ensembl" id="ENST00000596745.5">
    <molecule id="Q9Y4J8-12"/>
    <property type="protein sequence ID" value="ENSP00000469121.1"/>
    <property type="gene ID" value="ENSG00000134769.23"/>
</dbReference>
<dbReference type="Ensembl" id="ENST00000597599.5">
    <molecule id="Q9Y4J8-16"/>
    <property type="protein sequence ID" value="ENSP00000473119.1"/>
    <property type="gene ID" value="ENSG00000134769.23"/>
</dbReference>
<dbReference type="Ensembl" id="ENST00000597674.5">
    <molecule id="Q9Y4J8-8"/>
    <property type="protein sequence ID" value="ENSP00000471783.1"/>
    <property type="gene ID" value="ENSG00000134769.23"/>
</dbReference>
<dbReference type="Ensembl" id="ENST00000598142.5">
    <molecule id="Q9Y4J8-2"/>
    <property type="protein sequence ID" value="ENSP00000470716.1"/>
    <property type="gene ID" value="ENSG00000134769.23"/>
</dbReference>
<dbReference type="Ensembl" id="ENST00000598334.5">
    <molecule id="Q9Y4J8-15"/>
    <property type="protein sequence ID" value="ENSP00000470152.1"/>
    <property type="gene ID" value="ENSG00000134769.23"/>
</dbReference>
<dbReference type="Ensembl" id="ENST00000598774.6">
    <molecule id="Q9Y4J8-5"/>
    <property type="protein sequence ID" value="ENSP00000472031.1"/>
    <property type="gene ID" value="ENSG00000134769.23"/>
</dbReference>
<dbReference type="Ensembl" id="ENST00000679796.1">
    <molecule id="Q9Y4J8-17"/>
    <property type="protein sequence ID" value="ENSP00000506659.1"/>
    <property type="gene ID" value="ENSG00000134769.23"/>
</dbReference>
<dbReference type="Ensembl" id="ENST00000679936.1">
    <molecule id="Q9Y4J8-5"/>
    <property type="protein sequence ID" value="ENSP00000506586.1"/>
    <property type="gene ID" value="ENSG00000134769.23"/>
</dbReference>
<dbReference type="Ensembl" id="ENST00000680346.1">
    <molecule id="Q9Y4J8-5"/>
    <property type="protein sequence ID" value="ENSP00000505947.1"/>
    <property type="gene ID" value="ENSG00000134769.23"/>
</dbReference>
<dbReference type="Ensembl" id="ENST00000681241.1">
    <molecule id="Q9Y4J8-13"/>
    <property type="protein sequence ID" value="ENSP00000506495.1"/>
    <property type="gene ID" value="ENSG00000134769.23"/>
</dbReference>
<dbReference type="Ensembl" id="ENST00000682483.1">
    <molecule id="Q9Y4J8-16"/>
    <property type="protein sequence ID" value="ENSP00000508159.1"/>
    <property type="gene ID" value="ENSG00000134769.23"/>
</dbReference>
<dbReference type="Ensembl" id="ENST00000683370.1">
    <molecule id="Q9Y4J8-16"/>
    <property type="protein sequence ID" value="ENSP00000507104.1"/>
    <property type="gene ID" value="ENSG00000134769.23"/>
</dbReference>
<dbReference type="Ensembl" id="ENST00000683379.1">
    <molecule id="Q9Y4J8-2"/>
    <property type="protein sequence ID" value="ENSP00000507995.1"/>
    <property type="gene ID" value="ENSG00000134769.23"/>
</dbReference>
<dbReference type="Ensembl" id="ENST00000683705.1">
    <molecule id="Q9Y4J8-13"/>
    <property type="protein sequence ID" value="ENSP00000507911.1"/>
    <property type="gene ID" value="ENSG00000134769.23"/>
</dbReference>
<dbReference type="Ensembl" id="ENST00000683876.1">
    <molecule id="Q9Y4J8-8"/>
    <property type="protein sequence ID" value="ENSP00000507423.1"/>
    <property type="gene ID" value="ENSG00000134769.23"/>
</dbReference>
<dbReference type="Ensembl" id="ENST00000684359.1">
    <molecule id="Q9Y4J8-2"/>
    <property type="protein sequence ID" value="ENSP00000507300.1"/>
    <property type="gene ID" value="ENSG00000134769.23"/>
</dbReference>
<dbReference type="Ensembl" id="ENST00000684610.1">
    <molecule id="Q9Y4J8-9"/>
    <property type="protein sequence ID" value="ENSP00000508348.1"/>
    <property type="gene ID" value="ENSG00000134769.23"/>
</dbReference>
<dbReference type="Ensembl" id="ENST00000684734.1">
    <molecule id="Q9Y4J8-9"/>
    <property type="protein sequence ID" value="ENSP00000506928.1"/>
    <property type="gene ID" value="ENSG00000134769.23"/>
</dbReference>
<dbReference type="GeneID" id="1837"/>
<dbReference type="KEGG" id="hsa:1837"/>
<dbReference type="MANE-Select" id="ENST00000444659.6">
    <molecule id="Q9Y4J8-17"/>
    <property type="protein sequence ID" value="ENSP00000405819.2"/>
    <property type="RefSeq nucleotide sequence ID" value="NM_001386795.1"/>
    <property type="RefSeq protein sequence ID" value="NP_001373724.1"/>
</dbReference>
<dbReference type="UCSC" id="uc002kxu.3">
    <molecule id="Q9Y4J8-1"/>
    <property type="organism name" value="human"/>
</dbReference>
<dbReference type="AGR" id="HGNC:3057"/>
<dbReference type="CTD" id="1837"/>
<dbReference type="DisGeNET" id="1837"/>
<dbReference type="GeneCards" id="DTNA"/>
<dbReference type="HGNC" id="HGNC:3057">
    <property type="gene designation" value="DTNA"/>
</dbReference>
<dbReference type="HPA" id="ENSG00000134769">
    <property type="expression patterns" value="Group enriched (brain, choroid plexus, heart muscle, skeletal muscle, tongue)"/>
</dbReference>
<dbReference type="MalaCards" id="DTNA"/>
<dbReference type="MIM" id="601239">
    <property type="type" value="gene"/>
</dbReference>
<dbReference type="MIM" id="604169">
    <property type="type" value="phenotype"/>
</dbReference>
<dbReference type="MIM" id="620971">
    <property type="type" value="phenotype"/>
</dbReference>
<dbReference type="neXtProt" id="NX_Q9Y4J8"/>
<dbReference type="OpenTargets" id="ENSG00000134769"/>
<dbReference type="Orphanet" id="54260">
    <property type="disease" value="Left ventricular noncompaction"/>
</dbReference>
<dbReference type="PharmGKB" id="PA27510"/>
<dbReference type="VEuPathDB" id="HostDB:ENSG00000134769"/>
<dbReference type="eggNOG" id="KOG4301">
    <property type="taxonomic scope" value="Eukaryota"/>
</dbReference>
<dbReference type="GeneTree" id="ENSGT00940000153897"/>
<dbReference type="HOGENOM" id="CLU_868655_0_0_1"/>
<dbReference type="InParanoid" id="Q9Y4J8"/>
<dbReference type="OMA" id="PFDSGSM"/>
<dbReference type="OrthoDB" id="6019271at2759"/>
<dbReference type="PAN-GO" id="Q9Y4J8">
    <property type="GO annotations" value="3 GO annotations based on evolutionary models"/>
</dbReference>
<dbReference type="PhylomeDB" id="Q9Y4J8"/>
<dbReference type="TreeFam" id="TF343849"/>
<dbReference type="PathwayCommons" id="Q9Y4J8"/>
<dbReference type="Reactome" id="R-HSA-9913351">
    <property type="pathway name" value="Formation of the dystrophin-glycoprotein complex (DGC)"/>
</dbReference>
<dbReference type="SignaLink" id="Q9Y4J8"/>
<dbReference type="SIGNOR" id="Q9Y4J8"/>
<dbReference type="BioGRID-ORCS" id="1837">
    <property type="hits" value="13 hits in 1132 CRISPR screens"/>
</dbReference>
<dbReference type="CD-CODE" id="FB4E32DD">
    <property type="entry name" value="Presynaptic clusters and postsynaptic densities"/>
</dbReference>
<dbReference type="ChiTaRS" id="DTNA">
    <property type="organism name" value="human"/>
</dbReference>
<dbReference type="EvolutionaryTrace" id="Q9Y4J8"/>
<dbReference type="GeneWiki" id="DTNA"/>
<dbReference type="GenomeRNAi" id="1837"/>
<dbReference type="Pharos" id="Q9Y4J8">
    <property type="development level" value="Tbio"/>
</dbReference>
<dbReference type="PRO" id="PR:Q9Y4J8"/>
<dbReference type="Proteomes" id="UP000005640">
    <property type="component" value="Chromosome 18"/>
</dbReference>
<dbReference type="RNAct" id="Q9Y4J8">
    <property type="molecule type" value="protein"/>
</dbReference>
<dbReference type="Bgee" id="ENSG00000134769">
    <property type="expression patterns" value="Expressed in medial globus pallidus and 178 other cell types or tissues"/>
</dbReference>
<dbReference type="ExpressionAtlas" id="Q9Y4J8">
    <property type="expression patterns" value="baseline and differential"/>
</dbReference>
<dbReference type="GO" id="GO:0030424">
    <property type="term" value="C:axon"/>
    <property type="evidence" value="ECO:0007669"/>
    <property type="project" value="Ensembl"/>
</dbReference>
<dbReference type="GO" id="GO:0030054">
    <property type="term" value="C:cell junction"/>
    <property type="evidence" value="ECO:0000314"/>
    <property type="project" value="HPA"/>
</dbReference>
<dbReference type="GO" id="GO:0005737">
    <property type="term" value="C:cytoplasm"/>
    <property type="evidence" value="ECO:0007669"/>
    <property type="project" value="UniProtKB-SubCell"/>
</dbReference>
<dbReference type="GO" id="GO:0031234">
    <property type="term" value="C:extrinsic component of cytoplasmic side of plasma membrane"/>
    <property type="evidence" value="ECO:0007669"/>
    <property type="project" value="Ensembl"/>
</dbReference>
<dbReference type="GO" id="GO:0045111">
    <property type="term" value="C:intermediate filament cytoskeleton"/>
    <property type="evidence" value="ECO:0000314"/>
    <property type="project" value="HPA"/>
</dbReference>
<dbReference type="GO" id="GO:0005654">
    <property type="term" value="C:nucleoplasm"/>
    <property type="evidence" value="ECO:0000314"/>
    <property type="project" value="HPA"/>
</dbReference>
<dbReference type="GO" id="GO:0005886">
    <property type="term" value="C:plasma membrane"/>
    <property type="evidence" value="ECO:0000318"/>
    <property type="project" value="GO_Central"/>
</dbReference>
<dbReference type="GO" id="GO:0032991">
    <property type="term" value="C:protein-containing complex"/>
    <property type="evidence" value="ECO:0000314"/>
    <property type="project" value="MGI"/>
</dbReference>
<dbReference type="GO" id="GO:0042383">
    <property type="term" value="C:sarcolemma"/>
    <property type="evidence" value="ECO:0007669"/>
    <property type="project" value="Ensembl"/>
</dbReference>
<dbReference type="GO" id="GO:0045202">
    <property type="term" value="C:synapse"/>
    <property type="evidence" value="ECO:0000318"/>
    <property type="project" value="GO_Central"/>
</dbReference>
<dbReference type="GO" id="GO:0030165">
    <property type="term" value="F:PDZ domain binding"/>
    <property type="evidence" value="ECO:0007669"/>
    <property type="project" value="Ensembl"/>
</dbReference>
<dbReference type="GO" id="GO:0008270">
    <property type="term" value="F:zinc ion binding"/>
    <property type="evidence" value="ECO:0007669"/>
    <property type="project" value="UniProtKB-KW"/>
</dbReference>
<dbReference type="GO" id="GO:0007268">
    <property type="term" value="P:chemical synaptic transmission"/>
    <property type="evidence" value="ECO:0000304"/>
    <property type="project" value="ProtInc"/>
</dbReference>
<dbReference type="GO" id="GO:0007274">
    <property type="term" value="P:neuromuscular synaptic transmission"/>
    <property type="evidence" value="ECO:0000304"/>
    <property type="project" value="ProtInc"/>
</dbReference>
<dbReference type="GO" id="GO:0007165">
    <property type="term" value="P:signal transduction"/>
    <property type="evidence" value="ECO:0000304"/>
    <property type="project" value="ProtInc"/>
</dbReference>
<dbReference type="GO" id="GO:0006941">
    <property type="term" value="P:striated muscle contraction"/>
    <property type="evidence" value="ECO:0000304"/>
    <property type="project" value="ProtInc"/>
</dbReference>
<dbReference type="GO" id="GO:0099536">
    <property type="term" value="P:synaptic signaling"/>
    <property type="evidence" value="ECO:0000318"/>
    <property type="project" value="GO_Central"/>
</dbReference>
<dbReference type="CDD" id="cd16249">
    <property type="entry name" value="EFh_DTNA"/>
    <property type="match status" value="1"/>
</dbReference>
<dbReference type="CDD" id="cd02334">
    <property type="entry name" value="ZZ_dystrophin"/>
    <property type="match status" value="1"/>
</dbReference>
<dbReference type="FunFam" id="1.10.238.10:FF:000014">
    <property type="entry name" value="Dystrobrevin alpha"/>
    <property type="match status" value="1"/>
</dbReference>
<dbReference type="FunFam" id="1.10.238.10:FF:000016">
    <property type="entry name" value="Dystrobrevin alpha"/>
    <property type="match status" value="1"/>
</dbReference>
<dbReference type="FunFam" id="3.30.60.90:FF:000002">
    <property type="entry name" value="Dystrobrevin alpha"/>
    <property type="match status" value="1"/>
</dbReference>
<dbReference type="Gene3D" id="3.30.60.90">
    <property type="match status" value="1"/>
</dbReference>
<dbReference type="Gene3D" id="1.10.238.10">
    <property type="entry name" value="EF-hand"/>
    <property type="match status" value="2"/>
</dbReference>
<dbReference type="InterPro" id="IPR017432">
    <property type="entry name" value="Distrobrevin"/>
</dbReference>
<dbReference type="InterPro" id="IPR011992">
    <property type="entry name" value="EF-hand-dom_pair"/>
</dbReference>
<dbReference type="InterPro" id="IPR015153">
    <property type="entry name" value="EF-hand_dom_typ1"/>
</dbReference>
<dbReference type="InterPro" id="IPR015154">
    <property type="entry name" value="EF-hand_dom_typ2"/>
</dbReference>
<dbReference type="InterPro" id="IPR050774">
    <property type="entry name" value="KCMF1/Dystrophin"/>
</dbReference>
<dbReference type="InterPro" id="IPR000433">
    <property type="entry name" value="Znf_ZZ"/>
</dbReference>
<dbReference type="InterPro" id="IPR043145">
    <property type="entry name" value="Znf_ZZ_sf"/>
</dbReference>
<dbReference type="PANTHER" id="PTHR12268:SF19">
    <property type="entry name" value="DYSTROBREVIN ALPHA"/>
    <property type="match status" value="1"/>
</dbReference>
<dbReference type="PANTHER" id="PTHR12268">
    <property type="entry name" value="E3 UBIQUITIN-PROTEIN LIGASE KCMF1"/>
    <property type="match status" value="1"/>
</dbReference>
<dbReference type="Pfam" id="PF09068">
    <property type="entry name" value="EF-hand_2"/>
    <property type="match status" value="1"/>
</dbReference>
<dbReference type="Pfam" id="PF09069">
    <property type="entry name" value="EF-hand_3"/>
    <property type="match status" value="1"/>
</dbReference>
<dbReference type="Pfam" id="PF00569">
    <property type="entry name" value="ZZ"/>
    <property type="match status" value="1"/>
</dbReference>
<dbReference type="PIRSF" id="PIRSF038204">
    <property type="entry name" value="Distrobrevin"/>
    <property type="match status" value="1"/>
</dbReference>
<dbReference type="SMART" id="SM00291">
    <property type="entry name" value="ZnF_ZZ"/>
    <property type="match status" value="1"/>
</dbReference>
<dbReference type="SUPFAM" id="SSF47473">
    <property type="entry name" value="EF-hand"/>
    <property type="match status" value="2"/>
</dbReference>
<dbReference type="SUPFAM" id="SSF57850">
    <property type="entry name" value="RING/U-box"/>
    <property type="match status" value="1"/>
</dbReference>
<dbReference type="PROSITE" id="PS01357">
    <property type="entry name" value="ZF_ZZ_1"/>
    <property type="match status" value="1"/>
</dbReference>
<dbReference type="PROSITE" id="PS50135">
    <property type="entry name" value="ZF_ZZ_2"/>
    <property type="match status" value="1"/>
</dbReference>
<feature type="chain" id="PRO_0000080036" description="Dystrobrevin alpha">
    <location>
        <begin position="1"/>
        <end position="743"/>
    </location>
</feature>
<feature type="zinc finger region" description="ZZ-type" evidence="4">
    <location>
        <begin position="238"/>
        <end position="294"/>
    </location>
</feature>
<feature type="region of interest" description="Interaction with MAGEE1" evidence="1">
    <location>
        <begin position="1"/>
        <end position="288"/>
    </location>
</feature>
<feature type="region of interest" description="Syntrophin-binding region">
    <location>
        <begin position="400"/>
        <end position="450"/>
    </location>
</feature>
<feature type="region of interest" description="Disordered" evidence="5">
    <location>
        <begin position="556"/>
        <end position="575"/>
    </location>
</feature>
<feature type="coiled-coil region" evidence="3">
    <location>
        <begin position="461"/>
        <end position="556"/>
    </location>
</feature>
<feature type="compositionally biased region" description="Polar residues" evidence="5">
    <location>
        <begin position="557"/>
        <end position="569"/>
    </location>
</feature>
<feature type="binding site" evidence="4">
    <location>
        <position position="243"/>
    </location>
    <ligand>
        <name>Zn(2+)</name>
        <dbReference type="ChEBI" id="CHEBI:29105"/>
        <label>1</label>
    </ligand>
</feature>
<feature type="binding site" evidence="4">
    <location>
        <position position="246"/>
    </location>
    <ligand>
        <name>Zn(2+)</name>
        <dbReference type="ChEBI" id="CHEBI:29105"/>
        <label>1</label>
    </ligand>
</feature>
<feature type="binding site" evidence="4">
    <location>
        <position position="258"/>
    </location>
    <ligand>
        <name>Zn(2+)</name>
        <dbReference type="ChEBI" id="CHEBI:29105"/>
        <label>2</label>
    </ligand>
</feature>
<feature type="binding site" evidence="4">
    <location>
        <position position="261"/>
    </location>
    <ligand>
        <name>Zn(2+)</name>
        <dbReference type="ChEBI" id="CHEBI:29105"/>
        <label>2</label>
    </ligand>
</feature>
<feature type="binding site" evidence="4">
    <location>
        <position position="267"/>
    </location>
    <ligand>
        <name>Zn(2+)</name>
        <dbReference type="ChEBI" id="CHEBI:29105"/>
        <label>1</label>
    </ligand>
</feature>
<feature type="binding site" evidence="4">
    <location>
        <position position="270"/>
    </location>
    <ligand>
        <name>Zn(2+)</name>
        <dbReference type="ChEBI" id="CHEBI:29105"/>
        <label>1</label>
    </ligand>
</feature>
<feature type="binding site" evidence="4">
    <location>
        <position position="280"/>
    </location>
    <ligand>
        <name>Zn(2+)</name>
        <dbReference type="ChEBI" id="CHEBI:29105"/>
        <label>2</label>
    </ligand>
</feature>
<feature type="binding site" evidence="4">
    <location>
        <position position="284"/>
    </location>
    <ligand>
        <name>Zn(2+)</name>
        <dbReference type="ChEBI" id="CHEBI:29105"/>
        <label>2</label>
    </ligand>
</feature>
<feature type="modified residue" description="Phosphoserine" evidence="2">
    <location>
        <position position="662"/>
    </location>
</feature>
<feature type="splice variant" id="VSP_004206" description="In isoform 6, isoform 8, isoform 10 and isoform 11." evidence="13 15">
    <location>
        <begin position="1"/>
        <end position="318"/>
    </location>
</feature>
<feature type="splice variant" id="VSP_047532" description="In isoform 12." evidence="13">
    <location>
        <begin position="202"/>
        <end position="451"/>
    </location>
</feature>
<feature type="splice variant" id="VSP_004207" description="In isoform 4, isoform 6, isoform 8, isoform 9, isoform 10, isoform 11, isoform 13, isoform 14, isoform 15, isoform 16 and isoform 17." evidence="13 14 15 17 18">
    <location>
        <begin position="335"/>
        <end position="337"/>
    </location>
</feature>
<feature type="splice variant" id="VSP_045444" description="In isoform 11." evidence="13">
    <original>RS</original>
    <variation>RRLPEGISASSPVAEEHSLIKLYVNQLDHGAR</variation>
    <location>
        <begin position="364"/>
        <end position="365"/>
    </location>
</feature>
<feature type="splice variant" id="VSP_043824" description="In isoform 10." evidence="13">
    <original>SSPPKDSEVEQNKLLARAAPAFLKGKGIQYSLNVADRLADEHVLIGLYVNMLRNNPSC</original>
    <variation>RLPEGISASSPVAEEHSLIKLYVNQLDHGAR</variation>
    <location>
        <begin position="365"/>
        <end position="422"/>
    </location>
</feature>
<feature type="splice variant" id="VSP_061450" description="In isoform 17.">
    <original>S</original>
    <variation>RLPEGISASSPVAEEHSLIKLYVNQLDHGAR</variation>
    <location>
        <position position="365"/>
    </location>
</feature>
<feature type="splice variant" id="VSP_004208" description="In isoform 2, isoform 5, isoform 8, isoform 13, isoform 14, isoform 15 and isoform 16." evidence="13 15 18">
    <location>
        <begin position="366"/>
        <end position="422"/>
    </location>
</feature>
<feature type="splice variant" id="VSP_004209" description="In isoform 7 and isoform 9." evidence="14 15 16 17">
    <original>PPKDSEVE</original>
    <variation>DGAFGGCV</variation>
    <location>
        <begin position="367"/>
        <end position="374"/>
    </location>
</feature>
<feature type="splice variant" id="VSP_004210" description="In isoform 7 and isoform 9." evidence="14 15 16 17">
    <location>
        <begin position="375"/>
        <end position="743"/>
    </location>
</feature>
<feature type="splice variant" id="VSP_004211" description="In isoform 6." evidence="15">
    <location>
        <begin position="392"/>
        <end position="422"/>
    </location>
</feature>
<feature type="splice variant" id="VSP_054816" description="In isoform 14." evidence="19">
    <original>K</original>
    <variation>KEEELKQG</variation>
    <location>
        <position position="554"/>
    </location>
</feature>
<feature type="splice variant" id="VSP_004212" description="In isoform 3, isoform 4, isoform 5, isoform 8, isoform 12 and isoform 16." evidence="13 15">
    <original>TQGAGSPRSSPSHTIS</original>
    <variation>EEELKQGVSYVPYCRS</variation>
    <location>
        <begin position="555"/>
        <end position="570"/>
    </location>
</feature>
<feature type="splice variant" id="VSP_004213" description="In isoform 3, isoform 4, isoform 5, isoform 8, isoform 12 and isoform 16." evidence="13 15">
    <location>
        <begin position="571"/>
        <end position="743"/>
    </location>
</feature>
<feature type="splice variant" id="VSP_054817" description="In isoform 15." evidence="19">
    <original>VSLQG</original>
    <variation>LHVSTETRLEHPCPVSETKWRVLFWGFVFFGGFLSLALQIYFWGLF</variation>
    <location>
        <begin position="739"/>
        <end position="743"/>
    </location>
</feature>
<feature type="sequence variant" id="VAR_090097" description="In LVNC1; uncertain significance; a transgenic mouse model shows deep trabeculation, dilated cardiomyopathy and cardiac dysfunction; dbSNP:rs775975702." evidence="9">
    <original>N</original>
    <variation>S</variation>
    <location>
        <position position="49"/>
    </location>
</feature>
<feature type="sequence variant" id="VAR_026744" description="In LVNC1; uncertain significance; dbSNP:rs104894654." evidence="7">
    <original>P</original>
    <variation>L</variation>
    <location>
        <position position="121"/>
    </location>
</feature>
<feature type="sequence variant" id="VAR_055320" description="In dbSNP:rs1048081." evidence="6 12">
    <original>A</original>
    <variation>E</variation>
    <location>
        <position position="180"/>
    </location>
</feature>
<feature type="sequence variant" id="VAR_090098" description="In MMCKR2; uncertain significance." evidence="11">
    <original>E</original>
    <variation>K</variation>
    <location>
        <position position="529"/>
    </location>
</feature>
<feature type="sequence variant" id="VAR_090099" description="Found in a patient with early-onset atrial fibrillation; uncertain significance; dbSNP:rs1477078144." evidence="10">
    <original>E</original>
    <variation>D</variation>
    <location>
        <position position="537"/>
    </location>
</feature>
<feature type="sequence conflict" description="In Ref. 2; AAB58541/AAB58542/AAB58543." evidence="19" ref="2">
    <original>Q</original>
    <variation>H</variation>
    <location>
        <position position="45"/>
    </location>
</feature>
<feature type="sequence conflict" description="In Ref. 3; CAA08769." evidence="19" ref="3">
    <original>E</original>
    <variation>K</variation>
    <location>
        <position position="64"/>
    </location>
</feature>
<feature type="sequence conflict" description="In Ref. 1; AAC50426 and 2; AAB58541/AAB58542/AAB58543." evidence="19" ref="1 2">
    <original>F</original>
    <variation>L</variation>
    <location>
        <position position="182"/>
    </location>
</feature>
<feature type="sequence conflict" description="In Ref. 1; AAC50430." evidence="19" ref="1">
    <original>E</original>
    <variation>K</variation>
    <location>
        <position position="314"/>
    </location>
</feature>
<feature type="sequence conflict" description="In Ref. 1; AAC50429." evidence="19" ref="1">
    <original>AGSP</original>
    <variation>SGTH</variation>
    <location>
        <begin position="558"/>
        <end position="561"/>
    </location>
</feature>
<feature type="sequence conflict" description="In Ref. 1; AAC50431." evidence="19" ref="1">
    <original>AG</original>
    <variation>GV</variation>
    <location>
        <begin position="558"/>
        <end position="559"/>
    </location>
</feature>
<feature type="sequence conflict" description="In Ref. 1; AAC50429." evidence="19" ref="1">
    <original>P</original>
    <variation>R</variation>
    <location>
        <position position="565"/>
    </location>
</feature>
<feature type="sequence conflict" description="In Ref. 1; AAC50429." evidence="19" ref="1">
    <original>T</original>
    <variation>S</variation>
    <location>
        <position position="568"/>
    </location>
</feature>
<feature type="sequence conflict" description="In Ref. 1; AAC50429." evidence="19" ref="1">
    <original>T</original>
    <variation>S</variation>
    <location>
        <position position="689"/>
    </location>
</feature>
<feature type="strand" evidence="21">
    <location>
        <begin position="244"/>
        <end position="246"/>
    </location>
</feature>
<feature type="strand" evidence="21">
    <location>
        <begin position="255"/>
        <end position="260"/>
    </location>
</feature>
<feature type="helix" evidence="21">
    <location>
        <begin position="268"/>
        <end position="273"/>
    </location>
</feature>
<feature type="strand" evidence="21">
    <location>
        <begin position="278"/>
        <end position="280"/>
    </location>
</feature>
<feature type="strand" evidence="21">
    <location>
        <begin position="286"/>
        <end position="289"/>
    </location>
</feature>
<comment type="function">
    <text>May be involved in the formation and stability of synapses as well as being involved in the clustering of nicotinic acetylcholine receptors.</text>
</comment>
<comment type="subunit">
    <text evidence="2 8">Interacts with dystrophin, utrophin and the syntrophins SNTA1, SNTB1, SNTB2, SNTG1 and SNTG2. Interacts with MAGEE1. Binds dystrobrevin binding protein 1 (By similarity). Interacts with CTNNAL1 (PubMed:22577143). The interaction is required for correct localization of both CTNNAL1 and DTNA (By similarity).</text>
</comment>
<comment type="subunit">
    <molecule>Isoform 7</molecule>
    <text evidence="2">Does not interact with dystrophin.</text>
</comment>
<comment type="subunit">
    <molecule>Isoform 8</molecule>
    <text evidence="2">Does not interact with dystrophin.</text>
</comment>
<comment type="interaction">
    <interactant intactId="EBI-949471">
        <id>Q9Y4J8</id>
    </interactant>
    <interactant intactId="EBI-514206">
        <id>Q9UBT7</id>
        <label>CTNNAL1</label>
    </interactant>
    <organismsDiffer>false</organismsDiffer>
    <experiments>5</experiments>
</comment>
<comment type="interaction">
    <interactant intactId="EBI-949471">
        <id>Q9Y4J8</id>
    </interactant>
    <interactant intactId="EBI-295827">
        <id>P11532</id>
        <label>DMD</label>
    </interactant>
    <organismsDiffer>false</organismsDiffer>
    <experiments>5</experiments>
</comment>
<comment type="interaction">
    <interactant intactId="EBI-949471">
        <id>Q9Y4J8</id>
    </interactant>
    <interactant intactId="EBI-295856">
        <id>P46939</id>
        <label>UTRN</label>
    </interactant>
    <organismsDiffer>false</organismsDiffer>
    <experiments>3</experiments>
</comment>
<comment type="subcellular location">
    <subcellularLocation>
        <location>Cytoplasm</location>
    </subcellularLocation>
    <subcellularLocation>
        <location>Synapse</location>
    </subcellularLocation>
    <subcellularLocation>
        <location evidence="1">Cell membrane</location>
    </subcellularLocation>
    <text evidence="1">In peripheral nerves, colocalizes with MAGEE1 in the Schwann cell membrane.</text>
</comment>
<comment type="alternative products">
    <event type="alternative splicing"/>
    <isoform>
        <id>Q9Y4J8-1</id>
        <name>1</name>
        <name>DTN-1</name>
        <sequence type="displayed"/>
    </isoform>
    <isoform>
        <id>Q9Y4J8-2</id>
        <name>2</name>
        <name>Dystrobrevin-alpha</name>
        <sequence type="described" ref="VSP_004208"/>
    </isoform>
    <isoform>
        <id>Q9Y4J8-3</id>
        <name>3</name>
        <name>DTN-2</name>
        <sequence type="described" ref="VSP_004212 VSP_004213"/>
    </isoform>
    <isoform>
        <id>Q9Y4J8-4</id>
        <name>4</name>
        <name>Dystrobrevin-beta</name>
        <sequence type="described" ref="VSP_004207 VSP_004212 VSP_004213"/>
    </isoform>
    <isoform>
        <id>Q9Y4J8-5</id>
        <name>5</name>
        <name>Dystrobrevin-gamma</name>
        <sequence type="described" ref="VSP_004208 VSP_004212 VSP_004213"/>
    </isoform>
    <isoform>
        <id>Q9Y4J8-6</id>
        <name>6</name>
        <name>Dystrobrevin-epsilon</name>
        <sequence type="described" ref="VSP_004206 VSP_004207 VSP_004211"/>
    </isoform>
    <isoform>
        <id>Q9Y4J8-7</id>
        <name>7</name>
        <name>DTN-3</name>
        <name>Alpha-dystrobrevin-3</name>
        <name>Dystrobrevin-delta</name>
        <sequence type="described" ref="VSP_004209 VSP_004210"/>
    </isoform>
    <isoform>
        <id>Q9Y4J8-8</id>
        <name>8</name>
        <name>Dystrobrevin-zeta</name>
        <sequence type="described" ref="VSP_004206 VSP_004207 VSP_004208 VSP_004212 VSP_004213"/>
    </isoform>
    <isoform>
        <id>Q9Y4J8-9</id>
        <name>9</name>
        <sequence type="described" ref="VSP_004207 VSP_004209 VSP_004210"/>
    </isoform>
    <isoform>
        <id>Q9Y4J8-10</id>
        <name>10</name>
        <sequence type="described" ref="VSP_004206 VSP_004207 VSP_043824"/>
    </isoform>
    <isoform>
        <id>Q9Y4J8-11</id>
        <name>11</name>
        <sequence type="described" ref="VSP_004206 VSP_004207 VSP_045444"/>
    </isoform>
    <isoform>
        <id>Q9Y4J8-12</id>
        <name>12</name>
        <sequence type="described" ref="VSP_047532 VSP_004212 VSP_004213"/>
    </isoform>
    <isoform>
        <id>Q9Y4J8-13</id>
        <name>13</name>
        <sequence type="described" ref="VSP_004207 VSP_004208"/>
    </isoform>
    <isoform>
        <id>Q9Y4J8-14</id>
        <name>14</name>
        <sequence type="described" ref="VSP_004207 VSP_004208 VSP_054816"/>
    </isoform>
    <isoform>
        <id>Q9Y4J8-15</id>
        <name>15</name>
        <sequence type="described" ref="VSP_004207 VSP_004208 VSP_054817"/>
    </isoform>
    <isoform>
        <id>Q9Y4J8-16</id>
        <name>16</name>
        <sequence type="described" ref="VSP_004207 VSP_004208 VSP_004212 VSP_004213"/>
    </isoform>
    <isoform>
        <id>Q9Y4J8-17</id>
        <name>17</name>
        <sequence type="described" ref="VSP_004207 VSP_061450"/>
    </isoform>
    <text>Additional isoforms seem to exist.</text>
</comment>
<comment type="tissue specificity">
    <text>Highly expressed in brain, skeletal and cardiac muscles, and expressed at lower levels in lung, liver and pancreas. Isoform 2 is not expressed in cardiac muscle. Isoform 7 and isoform 8 are only expressed in muscle.</text>
</comment>
<comment type="domain">
    <text evidence="1 8">The coiled coil domain mediates the interaction with dystrophin, alpha-catulin and utrophin.</text>
</comment>
<comment type="PTM">
    <text evidence="1">Phosphorylation of DTN-1 on tyrosine kinase substrate domain present in the C-terminus.</text>
</comment>
<comment type="disease" evidence="7 9">
    <disease id="DI-00823">
        <name>Left ventricular non-compaction 1</name>
        <acronym>LVNC1</acronym>
        <description>A form of left ventricular non-compaction, a cardiomyopathy due to myocardial morphogenesis arrest and characterized by a hypertrophic left ventricle, a severely thickened 2-layered myocardium, numerous prominent trabeculations, deep intertrabecular recesses, and poor systolic function. Clinical manifestations are variable. Some affected individuals experience no symptoms at all, others develop heart failure. In some cases, left ventricular non-compaction is associated with other congenital heart anomalies. LVNC1 is an autosomal dominant condition.</description>
        <dbReference type="MIM" id="604169"/>
    </disease>
    <text>The disease is caused by variants affecting the gene represented in this entry.</text>
</comment>
<comment type="disease" evidence="11">
    <disease id="DI-06954">
        <name>Myopathy with myalgia, increased serum creatine kinase, and with or without episodic rhabdomyolysis 2</name>
        <acronym>MMCKR2</acronym>
        <description>An autosomal dominant muscular disorder characterized by myalgia, muscle cramps and exercise intolerance with variable ages of onset, and persistent elevations of serum creatine kinase levels. Muscle biopsy shows mixed myopathic and dystrophic findings, characterized by fiber size variability, internalized nuclei, and slightly increased extracellular connective tissue and inflammation.</description>
        <dbReference type="MIM" id="620971"/>
    </disease>
    <text>The disease may be caused by variants affecting the gene represented in this entry.</text>
</comment>
<comment type="similarity">
    <text evidence="19">Belongs to the dystrophin family. Dystrobrevin subfamily.</text>
</comment>
<comment type="sequence caution" evidence="19">
    <conflict type="erroneous initiation">
        <sequence resource="EMBL-CDS" id="BAD92339"/>
    </conflict>
    <text>Extended N-terminus.</text>
</comment>
<protein>
    <recommendedName>
        <fullName evidence="19">Dystrobrevin alpha</fullName>
        <shortName>DTN-A</shortName>
    </recommendedName>
    <alternativeName>
        <fullName>Alpha-dystrobrevin</fullName>
    </alternativeName>
    <alternativeName>
        <fullName>Dystrophin-related protein 3</fullName>
    </alternativeName>
</protein>
<proteinExistence type="evidence at protein level"/>
<reference key="1">
    <citation type="journal article" date="1996" name="Hum. Mol. Genet.">
        <title>Cloning and characterization of the human homologue of a dystrophin related phosphoprotein found at the Torpedo electric organ post-synaptic membrane.</title>
        <authorList>
            <person name="Sadoulet-Puccio H.M."/>
            <person name="Khurana T.S."/>
            <person name="Cohen J.B."/>
            <person name="Kunkel L.M."/>
        </authorList>
    </citation>
    <scope>NUCLEOTIDE SEQUENCE [MRNA] (ISOFORMS 2; 4; 5; 6; 7 AND 8)</scope>
    <scope>VARIANT GLU-180</scope>
</reference>
<reference key="2">
    <citation type="journal article" date="1997" name="Neurogenetics">
        <title>The genomic organization of human dystrobrevin.</title>
        <authorList>
            <person name="Sadoulet-Puccio H.M."/>
            <person name="Feener C.A."/>
            <person name="Schaid D.J."/>
            <person name="Thibodeau S.N."/>
            <person name="Michels V.V."/>
            <person name="Kunkel L.M."/>
        </authorList>
    </citation>
    <scope>NUCLEOTIDE SEQUENCE [GENOMIC DNA] (ISOFORMS 1; 3 AND 7)</scope>
    <scope>VARIANT GLU-180</scope>
</reference>
<reference key="3">
    <citation type="journal article" date="1998" name="J. Cell Sci.">
        <title>Characterisation of alpha-dystrobrevin in muscle.</title>
        <authorList>
            <person name="Nawrotzki R."/>
            <person name="Loh N.Y."/>
            <person name="Ruegg M.A."/>
            <person name="Davies K.E."/>
            <person name="Blake D.J."/>
        </authorList>
    </citation>
    <scope>NUCLEOTIDE SEQUENCE [MRNA] (ISOFORM 7)</scope>
    <source>
        <tissue>Fetal brain</tissue>
    </source>
</reference>
<reference key="4">
    <citation type="submission" date="2003-05" db="EMBL/GenBank/DDBJ databases">
        <title>Cloning of human full-length CDSs in BD Creator(TM) system donor vector.</title>
        <authorList>
            <person name="Kalnine N."/>
            <person name="Chen X."/>
            <person name="Rolfs A."/>
            <person name="Halleck A."/>
            <person name="Hines L."/>
            <person name="Eisenstein S."/>
            <person name="Koundinya M."/>
            <person name="Raphael J."/>
            <person name="Moreira D."/>
            <person name="Kelley T."/>
            <person name="LaBaer J."/>
            <person name="Lin Y."/>
            <person name="Phelan M."/>
            <person name="Farmer A."/>
        </authorList>
    </citation>
    <scope>NUCLEOTIDE SEQUENCE [LARGE SCALE MRNA] (ISOFORM 9)</scope>
</reference>
<reference key="5">
    <citation type="journal article" date="2004" name="Nat. Genet.">
        <title>Complete sequencing and characterization of 21,243 full-length human cDNAs.</title>
        <authorList>
            <person name="Ota T."/>
            <person name="Suzuki Y."/>
            <person name="Nishikawa T."/>
            <person name="Otsuki T."/>
            <person name="Sugiyama T."/>
            <person name="Irie R."/>
            <person name="Wakamatsu A."/>
            <person name="Hayashi K."/>
            <person name="Sato H."/>
            <person name="Nagai K."/>
            <person name="Kimura K."/>
            <person name="Makita H."/>
            <person name="Sekine M."/>
            <person name="Obayashi M."/>
            <person name="Nishi T."/>
            <person name="Shibahara T."/>
            <person name="Tanaka T."/>
            <person name="Ishii S."/>
            <person name="Yamamoto J."/>
            <person name="Saito K."/>
            <person name="Kawai Y."/>
            <person name="Isono Y."/>
            <person name="Nakamura Y."/>
            <person name="Nagahari K."/>
            <person name="Murakami K."/>
            <person name="Yasuda T."/>
            <person name="Iwayanagi T."/>
            <person name="Wagatsuma M."/>
            <person name="Shiratori A."/>
            <person name="Sudo H."/>
            <person name="Hosoiri T."/>
            <person name="Kaku Y."/>
            <person name="Kodaira H."/>
            <person name="Kondo H."/>
            <person name="Sugawara M."/>
            <person name="Takahashi M."/>
            <person name="Kanda K."/>
            <person name="Yokoi T."/>
            <person name="Furuya T."/>
            <person name="Kikkawa E."/>
            <person name="Omura Y."/>
            <person name="Abe K."/>
            <person name="Kamihara K."/>
            <person name="Katsuta N."/>
            <person name="Sato K."/>
            <person name="Tanikawa M."/>
            <person name="Yamazaki M."/>
            <person name="Ninomiya K."/>
            <person name="Ishibashi T."/>
            <person name="Yamashita H."/>
            <person name="Murakawa K."/>
            <person name="Fujimori K."/>
            <person name="Tanai H."/>
            <person name="Kimata M."/>
            <person name="Watanabe M."/>
            <person name="Hiraoka S."/>
            <person name="Chiba Y."/>
            <person name="Ishida S."/>
            <person name="Ono Y."/>
            <person name="Takiguchi S."/>
            <person name="Watanabe S."/>
            <person name="Yosida M."/>
            <person name="Hotuta T."/>
            <person name="Kusano J."/>
            <person name="Kanehori K."/>
            <person name="Takahashi-Fujii A."/>
            <person name="Hara H."/>
            <person name="Tanase T.-O."/>
            <person name="Nomura Y."/>
            <person name="Togiya S."/>
            <person name="Komai F."/>
            <person name="Hara R."/>
            <person name="Takeuchi K."/>
            <person name="Arita M."/>
            <person name="Imose N."/>
            <person name="Musashino K."/>
            <person name="Yuuki H."/>
            <person name="Oshima A."/>
            <person name="Sasaki N."/>
            <person name="Aotsuka S."/>
            <person name="Yoshikawa Y."/>
            <person name="Matsunawa H."/>
            <person name="Ichihara T."/>
            <person name="Shiohata N."/>
            <person name="Sano S."/>
            <person name="Moriya S."/>
            <person name="Momiyama H."/>
            <person name="Satoh N."/>
            <person name="Takami S."/>
            <person name="Terashima Y."/>
            <person name="Suzuki O."/>
            <person name="Nakagawa S."/>
            <person name="Senoh A."/>
            <person name="Mizoguchi H."/>
            <person name="Goto Y."/>
            <person name="Shimizu F."/>
            <person name="Wakebe H."/>
            <person name="Hishigaki H."/>
            <person name="Watanabe T."/>
            <person name="Sugiyama A."/>
            <person name="Takemoto M."/>
            <person name="Kawakami B."/>
            <person name="Yamazaki M."/>
            <person name="Watanabe K."/>
            <person name="Kumagai A."/>
            <person name="Itakura S."/>
            <person name="Fukuzumi Y."/>
            <person name="Fujimori Y."/>
            <person name="Komiyama M."/>
            <person name="Tashiro H."/>
            <person name="Tanigami A."/>
            <person name="Fujiwara T."/>
            <person name="Ono T."/>
            <person name="Yamada K."/>
            <person name="Fujii Y."/>
            <person name="Ozaki K."/>
            <person name="Hirao M."/>
            <person name="Ohmori Y."/>
            <person name="Kawabata A."/>
            <person name="Hikiji T."/>
            <person name="Kobatake N."/>
            <person name="Inagaki H."/>
            <person name="Ikema Y."/>
            <person name="Okamoto S."/>
            <person name="Okitani R."/>
            <person name="Kawakami T."/>
            <person name="Noguchi S."/>
            <person name="Itoh T."/>
            <person name="Shigeta K."/>
            <person name="Senba T."/>
            <person name="Matsumura K."/>
            <person name="Nakajima Y."/>
            <person name="Mizuno T."/>
            <person name="Morinaga M."/>
            <person name="Sasaki M."/>
            <person name="Togashi T."/>
            <person name="Oyama M."/>
            <person name="Hata H."/>
            <person name="Watanabe M."/>
            <person name="Komatsu T."/>
            <person name="Mizushima-Sugano J."/>
            <person name="Satoh T."/>
            <person name="Shirai Y."/>
            <person name="Takahashi Y."/>
            <person name="Nakagawa K."/>
            <person name="Okumura K."/>
            <person name="Nagase T."/>
            <person name="Nomura N."/>
            <person name="Kikuchi H."/>
            <person name="Masuho Y."/>
            <person name="Yamashita R."/>
            <person name="Nakai K."/>
            <person name="Yada T."/>
            <person name="Nakamura Y."/>
            <person name="Ohara O."/>
            <person name="Isogai T."/>
            <person name="Sugano S."/>
        </authorList>
    </citation>
    <scope>NUCLEOTIDE SEQUENCE [LARGE SCALE MRNA] (ISOFORMS 10; 11; 12 AND 16)</scope>
    <source>
        <tissue>Brain</tissue>
        <tissue>Hippocampus</tissue>
        <tissue>Teratocarcinoma</tissue>
    </source>
</reference>
<reference key="6">
    <citation type="submission" date="2005-03" db="EMBL/GenBank/DDBJ databases">
        <title>Homo sapiens protein coding cDNA.</title>
        <authorList>
            <person name="Totoki Y."/>
            <person name="Toyoda A."/>
            <person name="Takeda T."/>
            <person name="Sakaki Y."/>
            <person name="Tanaka A."/>
            <person name="Yokoyama S."/>
            <person name="Ohara O."/>
            <person name="Nagase T."/>
            <person name="Kikuno R.F."/>
        </authorList>
    </citation>
    <scope>NUCLEOTIDE SEQUENCE [LARGE SCALE MRNA] (ISOFORM 13)</scope>
    <source>
        <tissue>Brain</tissue>
    </source>
</reference>
<reference key="7">
    <citation type="journal article" date="2005" name="Nature">
        <title>DNA sequence and analysis of human chromosome 18.</title>
        <authorList>
            <person name="Nusbaum C."/>
            <person name="Zody M.C."/>
            <person name="Borowsky M.L."/>
            <person name="Kamal M."/>
            <person name="Kodira C.D."/>
            <person name="Taylor T.D."/>
            <person name="Whittaker C.A."/>
            <person name="Chang J.L."/>
            <person name="Cuomo C.A."/>
            <person name="Dewar K."/>
            <person name="FitzGerald M.G."/>
            <person name="Yang X."/>
            <person name="Abouelleil A."/>
            <person name="Allen N.R."/>
            <person name="Anderson S."/>
            <person name="Bloom T."/>
            <person name="Bugalter B."/>
            <person name="Butler J."/>
            <person name="Cook A."/>
            <person name="DeCaprio D."/>
            <person name="Engels R."/>
            <person name="Garber M."/>
            <person name="Gnirke A."/>
            <person name="Hafez N."/>
            <person name="Hall J.L."/>
            <person name="Norman C.H."/>
            <person name="Itoh T."/>
            <person name="Jaffe D.B."/>
            <person name="Kuroki Y."/>
            <person name="Lehoczky J."/>
            <person name="Lui A."/>
            <person name="Macdonald P."/>
            <person name="Mauceli E."/>
            <person name="Mikkelsen T.S."/>
            <person name="Naylor J.W."/>
            <person name="Nicol R."/>
            <person name="Nguyen C."/>
            <person name="Noguchi H."/>
            <person name="O'Leary S.B."/>
            <person name="Piqani B."/>
            <person name="Smith C.L."/>
            <person name="Talamas J.A."/>
            <person name="Topham K."/>
            <person name="Totoki Y."/>
            <person name="Toyoda A."/>
            <person name="Wain H.M."/>
            <person name="Young S.K."/>
            <person name="Zeng Q."/>
            <person name="Zimmer A.R."/>
            <person name="Fujiyama A."/>
            <person name="Hattori M."/>
            <person name="Birren B.W."/>
            <person name="Sakaki Y."/>
            <person name="Lander E.S."/>
        </authorList>
    </citation>
    <scope>NUCLEOTIDE SEQUENCE [LARGE SCALE GENOMIC DNA]</scope>
</reference>
<reference key="8">
    <citation type="submission" date="2005-07" db="EMBL/GenBank/DDBJ databases">
        <authorList>
            <person name="Mural R.J."/>
            <person name="Istrail S."/>
            <person name="Sutton G."/>
            <person name="Florea L."/>
            <person name="Halpern A.L."/>
            <person name="Mobarry C.M."/>
            <person name="Lippert R."/>
            <person name="Walenz B."/>
            <person name="Shatkay H."/>
            <person name="Dew I."/>
            <person name="Miller J.R."/>
            <person name="Flanigan M.J."/>
            <person name="Edwards N.J."/>
            <person name="Bolanos R."/>
            <person name="Fasulo D."/>
            <person name="Halldorsson B.V."/>
            <person name="Hannenhalli S."/>
            <person name="Turner R."/>
            <person name="Yooseph S."/>
            <person name="Lu F."/>
            <person name="Nusskern D.R."/>
            <person name="Shue B.C."/>
            <person name="Zheng X.H."/>
            <person name="Zhong F."/>
            <person name="Delcher A.L."/>
            <person name="Huson D.H."/>
            <person name="Kravitz S.A."/>
            <person name="Mouchard L."/>
            <person name="Reinert K."/>
            <person name="Remington K.A."/>
            <person name="Clark A.G."/>
            <person name="Waterman M.S."/>
            <person name="Eichler E.E."/>
            <person name="Adams M.D."/>
            <person name="Hunkapiller M.W."/>
            <person name="Myers E.W."/>
            <person name="Venter J.C."/>
        </authorList>
    </citation>
    <scope>NUCLEOTIDE SEQUENCE [LARGE SCALE GENOMIC DNA]</scope>
</reference>
<reference key="9">
    <citation type="journal article" date="2004" name="Genome Res.">
        <title>The status, quality, and expansion of the NIH full-length cDNA project: the Mammalian Gene Collection (MGC).</title>
        <authorList>
            <consortium name="The MGC Project Team"/>
        </authorList>
    </citation>
    <scope>NUCLEOTIDE SEQUENCE [LARGE SCALE MRNA] (ISOFORM 9)</scope>
    <source>
        <tissue>Heart</tissue>
    </source>
</reference>
<reference key="10">
    <citation type="journal article" date="1995" name="J. Cell Biol.">
        <title>Syntrophin binds to an alternatively spliced exon of dystrophin.</title>
        <authorList>
            <person name="Ahn A.H."/>
            <person name="Kunkel L.M."/>
        </authorList>
    </citation>
    <scope>INTERACTION WITH SNTB1</scope>
</reference>
<reference key="11">
    <citation type="journal article" date="1996" name="J. Biol. Chem.">
        <title>The three human syntrophin genes are expressed in diverse tissues, have distinct chromosomal locations, and each bind to dystrophin and its relatives.</title>
        <authorList>
            <person name="Ahn A.H."/>
            <person name="Feener C.A."/>
            <person name="Gussoni E."/>
            <person name="Yoshida M."/>
            <person name="Ozawa E."/>
            <person name="Kunkel L.M."/>
        </authorList>
    </citation>
    <scope>INTERACTION WITH SNTA1 AND SNTB2</scope>
</reference>
<reference key="12">
    <citation type="journal article" date="2000" name="J. Biol. Chem.">
        <title>Gamma1- and gamma2-syntrophins, two novel dystrophin-binding proteins localized in neuronal cells.</title>
        <authorList>
            <person name="Piluso G."/>
            <person name="Mirabella M."/>
            <person name="Ricci E."/>
            <person name="Belsito A."/>
            <person name="Abbondanza C."/>
            <person name="Servidei S."/>
            <person name="Puca A.A."/>
            <person name="Tonali P."/>
            <person name="Puca G.A."/>
            <person name="Nigro V."/>
        </authorList>
    </citation>
    <scope>INTERACTION WITH SNTG1 AND SNTG2</scope>
</reference>
<reference key="13">
    <citation type="journal article" date="2011" name="Sci. Signal.">
        <title>System-wide temporal characterization of the proteome and phosphoproteome of human embryonic stem cell differentiation.</title>
        <authorList>
            <person name="Rigbolt K.T."/>
            <person name="Prokhorova T.A."/>
            <person name="Akimov V."/>
            <person name="Henningsen J."/>
            <person name="Johansen P.T."/>
            <person name="Kratchmarova I."/>
            <person name="Kassem M."/>
            <person name="Mann M."/>
            <person name="Olsen J.V."/>
            <person name="Blagoev B."/>
        </authorList>
    </citation>
    <scope>IDENTIFICATION BY MASS SPECTROMETRY [LARGE SCALE ANALYSIS]</scope>
</reference>
<reference evidence="19" key="14">
    <citation type="journal article" date="2012" name="J. Biol. Chem.">
        <title>Interaction of alpha-catulin with dystrobrevin contributes to integrity of dystrophin complex in muscle.</title>
        <authorList>
            <person name="Oh H.J."/>
            <person name="Abraham L.S."/>
            <person name="van Hengel J."/>
            <person name="Stove C."/>
            <person name="Proszynski T.J."/>
            <person name="Gevaert K."/>
            <person name="DiMario J.X."/>
            <person name="Sanes J.R."/>
            <person name="van Roy F."/>
            <person name="Kim H."/>
        </authorList>
    </citation>
    <scope>INTERACTION WITH CTNNAL1</scope>
    <scope>DOMAIN</scope>
</reference>
<reference key="15">
    <citation type="submission" date="2007-06" db="PDB data bank">
        <title>Solution structure of the ZZ domain of dystrobrevin alpha.</title>
        <authorList>
            <consortium name="RIKEN structural genomics initiative (RSGI)"/>
        </authorList>
    </citation>
    <scope>STRUCTURE BY NMR OF 237-292</scope>
</reference>
<reference key="16">
    <citation type="journal article" date="2001" name="Circulation">
        <title>Novel gene mutations in patients with left ventricular noncompaction or Barth syndrome.</title>
        <authorList>
            <person name="Ichida F."/>
            <person name="Tsubata S."/>
            <person name="Bowles K.R."/>
            <person name="Haneda N."/>
            <person name="Uese K."/>
            <person name="Miyawaki T."/>
            <person name="Dreyer W.J."/>
            <person name="Messina J."/>
            <person name="Li H."/>
            <person name="Bowles N.E."/>
            <person name="Towbin J.A."/>
        </authorList>
    </citation>
    <scope>VARIANT LVNC1 LEU-121</scope>
</reference>
<reference key="17">
    <citation type="journal article" date="2017" name="Int. Heart J.">
        <title>Phenotype and functional analyses in a transgenic mouse model of left ventricular noncompaction caused by a DTNA mutation.</title>
        <authorList>
            <person name="Cao Q."/>
            <person name="Shen Y."/>
            <person name="Liu X."/>
            <person name="Yu X."/>
            <person name="Yuan P."/>
            <person name="Wan R."/>
            <person name="Liu X."/>
            <person name="Peng X."/>
            <person name="He W."/>
            <person name="Pu J."/>
            <person name="Hong K."/>
        </authorList>
    </citation>
    <scope>VARIANT LVNC1 SER-49</scope>
</reference>
<reference key="18">
    <citation type="journal article" date="2022" name="BMC Cardiovasc. Disord.">
        <title>Whole-exome sequencing reveals a rare missense variant in DTNA in an Iranian pedigree with early-onset atrial fibrillation.</title>
        <authorList>
            <person name="Malakootian M."/>
            <person name="Jalilian M."/>
            <person name="Kalayinia S."/>
            <person name="Hosseini Moghadam M."/>
            <person name="Heidarali M."/>
            <person name="Haghjoo M."/>
        </authorList>
    </citation>
    <scope>VARIANT ASP-537</scope>
</reference>
<reference key="19">
    <citation type="journal article" date="2023" name="Acta Neuropathol.">
        <title>Variants in DTNA cause a mild, dominantly inherited muscular dystrophy.</title>
        <authorList>
            <person name="Nascimento A."/>
            <person name="Bruels C.C."/>
            <person name="Donkervoort S."/>
            <person name="Foley A.R."/>
            <person name="Codina A."/>
            <person name="Milisenda J.C."/>
            <person name="Estrella E.A."/>
            <person name="Li C."/>
            <person name="Pijuan J."/>
            <person name="Draper I."/>
            <person name="Hu Y."/>
            <person name="Stafki S.A."/>
            <person name="Pais L.S."/>
            <person name="Ganesh V.S."/>
            <person name="O'Donnell-Luria A."/>
            <person name="Syeda S.B."/>
            <person name="Carrera-Garcia L."/>
            <person name="Exposito-Escudero J."/>
            <person name="Yubero D."/>
            <person name="Martorell L."/>
            <person name="Pinal-Fernandez I."/>
            <person name="Lidov H.G.W."/>
            <person name="Mammen A.L."/>
            <person name="Grau-Junyent J.M."/>
            <person name="Ortez C."/>
            <person name="Palau F."/>
            <person name="Ghosh P.S."/>
            <person name="Darras B.T."/>
            <person name="Jou C."/>
            <person name="Kunkel L.M."/>
            <person name="Hoenicka J."/>
            <person name="Boennemann C.G."/>
            <person name="Kang P.B."/>
            <person name="Natera-de Benito D."/>
        </authorList>
    </citation>
    <scope>VARIANT MMCKR2 LYS-529</scope>
    <scope>INVOLVEMENT IN MMCKR2</scope>
</reference>